<evidence type="ECO:0000305" key="1"/>
<accession>O05023</accession>
<gene>
    <name type="ordered locus">HI_0493</name>
</gene>
<proteinExistence type="inferred from homology"/>
<name>Y493_HAEIN</name>
<dbReference type="EMBL" id="L42023">
    <property type="protein sequence ID" value="AAC22150.1"/>
    <property type="molecule type" value="Genomic_DNA"/>
</dbReference>
<dbReference type="PIR" id="D64153">
    <property type="entry name" value="D64153"/>
</dbReference>
<dbReference type="RefSeq" id="NP_438652.1">
    <property type="nucleotide sequence ID" value="NC_000907.1"/>
</dbReference>
<dbReference type="STRING" id="71421.HI_0493"/>
<dbReference type="DNASU" id="949783"/>
<dbReference type="EnsemblBacteria" id="AAC22150">
    <property type="protein sequence ID" value="AAC22150"/>
    <property type="gene ID" value="HI_0493"/>
</dbReference>
<dbReference type="KEGG" id="hin:HI_0493"/>
<dbReference type="PATRIC" id="fig|71421.8.peg.511"/>
<dbReference type="eggNOG" id="COG2801">
    <property type="taxonomic scope" value="Bacteria"/>
</dbReference>
<dbReference type="HOGENOM" id="CLU_2069805_0_0_6"/>
<dbReference type="OrthoDB" id="5679417at2"/>
<dbReference type="PhylomeDB" id="O05023"/>
<dbReference type="BioCyc" id="HINF71421:G1GJ1-507-MONOMER"/>
<dbReference type="Proteomes" id="UP000000579">
    <property type="component" value="Chromosome"/>
</dbReference>
<dbReference type="GO" id="GO:0003677">
    <property type="term" value="F:DNA binding"/>
    <property type="evidence" value="ECO:0007669"/>
    <property type="project" value="UniProtKB-KW"/>
</dbReference>
<dbReference type="GO" id="GO:0015074">
    <property type="term" value="P:DNA integration"/>
    <property type="evidence" value="ECO:0007669"/>
    <property type="project" value="InterPro"/>
</dbReference>
<dbReference type="GO" id="GO:0006310">
    <property type="term" value="P:DNA recombination"/>
    <property type="evidence" value="ECO:0007669"/>
    <property type="project" value="UniProtKB-KW"/>
</dbReference>
<dbReference type="GO" id="GO:0032196">
    <property type="term" value="P:transposition"/>
    <property type="evidence" value="ECO:0007669"/>
    <property type="project" value="UniProtKB-KW"/>
</dbReference>
<dbReference type="InterPro" id="IPR001584">
    <property type="entry name" value="Integrase_cat-core"/>
</dbReference>
<dbReference type="InterPro" id="IPR012337">
    <property type="entry name" value="RNaseH-like_sf"/>
</dbReference>
<dbReference type="InterPro" id="IPR050900">
    <property type="entry name" value="Transposase_IS3/IS150/IS904"/>
</dbReference>
<dbReference type="PANTHER" id="PTHR46889">
    <property type="entry name" value="TRANSPOSASE INSF FOR INSERTION SEQUENCE IS3B-RELATED"/>
    <property type="match status" value="1"/>
</dbReference>
<dbReference type="PANTHER" id="PTHR46889:SF4">
    <property type="entry name" value="TRANSPOSASE INSO FOR INSERTION SEQUENCE ELEMENT IS911B-RELATED"/>
    <property type="match status" value="1"/>
</dbReference>
<dbReference type="Pfam" id="PF13333">
    <property type="entry name" value="rve_2"/>
    <property type="match status" value="1"/>
</dbReference>
<dbReference type="SUPFAM" id="SSF53098">
    <property type="entry name" value="Ribonuclease H-like"/>
    <property type="match status" value="1"/>
</dbReference>
<comment type="similarity">
    <text evidence="1">Belongs to the transposase IS3/IS150/IS904 family.</text>
</comment>
<sequence>MRGRTRIGKFTTCGERNPKKVARTQPTKKDLKTQNPILHSDQGWLYQMVGYQAILRENSIQQNMSRKGNYLDNNAMENFFGRLKTECYYDKRFETFKQLKKQLMSIFIITTMITFRGN</sequence>
<protein>
    <recommendedName>
        <fullName>Uncharacterized transposase-like protein HI_0493</fullName>
    </recommendedName>
</protein>
<keyword id="KW-0233">DNA recombination</keyword>
<keyword id="KW-0238">DNA-binding</keyword>
<keyword id="KW-1185">Reference proteome</keyword>
<keyword id="KW-0814">Transposable element</keyword>
<keyword id="KW-0815">Transposition</keyword>
<organism>
    <name type="scientific">Haemophilus influenzae (strain ATCC 51907 / DSM 11121 / KW20 / Rd)</name>
    <dbReference type="NCBI Taxonomy" id="71421"/>
    <lineage>
        <taxon>Bacteria</taxon>
        <taxon>Pseudomonadati</taxon>
        <taxon>Pseudomonadota</taxon>
        <taxon>Gammaproteobacteria</taxon>
        <taxon>Pasteurellales</taxon>
        <taxon>Pasteurellaceae</taxon>
        <taxon>Haemophilus</taxon>
    </lineage>
</organism>
<reference key="1">
    <citation type="journal article" date="1995" name="Science">
        <title>Whole-genome random sequencing and assembly of Haemophilus influenzae Rd.</title>
        <authorList>
            <person name="Fleischmann R.D."/>
            <person name="Adams M.D."/>
            <person name="White O."/>
            <person name="Clayton R.A."/>
            <person name="Kirkness E.F."/>
            <person name="Kerlavage A.R."/>
            <person name="Bult C.J."/>
            <person name="Tomb J.-F."/>
            <person name="Dougherty B.A."/>
            <person name="Merrick J.M."/>
            <person name="McKenney K."/>
            <person name="Sutton G.G."/>
            <person name="FitzHugh W."/>
            <person name="Fields C.A."/>
            <person name="Gocayne J.D."/>
            <person name="Scott J.D."/>
            <person name="Shirley R."/>
            <person name="Liu L.-I."/>
            <person name="Glodek A."/>
            <person name="Kelley J.M."/>
            <person name="Weidman J.F."/>
            <person name="Phillips C.A."/>
            <person name="Spriggs T."/>
            <person name="Hedblom E."/>
            <person name="Cotton M.D."/>
            <person name="Utterback T.R."/>
            <person name="Hanna M.C."/>
            <person name="Nguyen D.T."/>
            <person name="Saudek D.M."/>
            <person name="Brandon R.C."/>
            <person name="Fine L.D."/>
            <person name="Fritchman J.L."/>
            <person name="Fuhrmann J.L."/>
            <person name="Geoghagen N.S.M."/>
            <person name="Gnehm C.L."/>
            <person name="McDonald L.A."/>
            <person name="Small K.V."/>
            <person name="Fraser C.M."/>
            <person name="Smith H.O."/>
            <person name="Venter J.C."/>
        </authorList>
    </citation>
    <scope>NUCLEOTIDE SEQUENCE [LARGE SCALE GENOMIC DNA]</scope>
    <source>
        <strain>ATCC 51907 / DSM 11121 / KW20 / Rd</strain>
    </source>
</reference>
<feature type="chain" id="PRO_0000075488" description="Uncharacterized transposase-like protein HI_0493">
    <location>
        <begin position="1"/>
        <end position="118"/>
    </location>
</feature>